<gene>
    <name evidence="1" type="primary">tig</name>
    <name type="ordered locus">SFV_0410</name>
</gene>
<organism>
    <name type="scientific">Shigella flexneri serotype 5b (strain 8401)</name>
    <dbReference type="NCBI Taxonomy" id="373384"/>
    <lineage>
        <taxon>Bacteria</taxon>
        <taxon>Pseudomonadati</taxon>
        <taxon>Pseudomonadota</taxon>
        <taxon>Gammaproteobacteria</taxon>
        <taxon>Enterobacterales</taxon>
        <taxon>Enterobacteriaceae</taxon>
        <taxon>Shigella</taxon>
    </lineage>
</organism>
<keyword id="KW-0131">Cell cycle</keyword>
<keyword id="KW-0132">Cell division</keyword>
<keyword id="KW-0143">Chaperone</keyword>
<keyword id="KW-0963">Cytoplasm</keyword>
<keyword id="KW-0413">Isomerase</keyword>
<keyword id="KW-0697">Rotamase</keyword>
<sequence length="432" mass="48193">MQVSVETTQGLGRRVTITIAADSIETAVKSELVNVAKKVRIDGFRKGKVPMNIVAQRYGASVRQDVLGDLMSRNFIDAIIKEKINPAGAPTYVPGEYKLGEDFTYSVEFEVYPEVELQGLEAIEVEKPIVEVTDADVDGMLDTLRKQQATWKEKDGAVEAEDRVTIDFTGSVDGEEFEGGKASDFVLAMGQGRMIPGFEDGIKGHKAGEEFTIDVTFPEEYHAENLKGKAAKFAINLKKVEERELPELTAEFIKRFGVEDGSVEGLRAEVRKNMERELKSAIRNRVKSQAIEGLVKANDIDVPAALIDSEIDVLRRQAAQRFGGNEKQALELPRELFEEQAKRRVVVGLLLGEVIRTNELKADEERVKGLIEEMASAYEDPKEVIEFYSKNKELMDNMRNVALEEQAVEAVLAKAKVTEKETTFNELMNQQA</sequence>
<name>TIG_SHIF8</name>
<reference key="1">
    <citation type="journal article" date="2006" name="BMC Genomics">
        <title>Complete genome sequence of Shigella flexneri 5b and comparison with Shigella flexneri 2a.</title>
        <authorList>
            <person name="Nie H."/>
            <person name="Yang F."/>
            <person name="Zhang X."/>
            <person name="Yang J."/>
            <person name="Chen L."/>
            <person name="Wang J."/>
            <person name="Xiong Z."/>
            <person name="Peng J."/>
            <person name="Sun L."/>
            <person name="Dong J."/>
            <person name="Xue Y."/>
            <person name="Xu X."/>
            <person name="Chen S."/>
            <person name="Yao Z."/>
            <person name="Shen Y."/>
            <person name="Jin Q."/>
        </authorList>
    </citation>
    <scope>NUCLEOTIDE SEQUENCE [LARGE SCALE GENOMIC DNA]</scope>
    <source>
        <strain>8401</strain>
    </source>
</reference>
<feature type="chain" id="PRO_1000022762" description="Trigger factor">
    <location>
        <begin position="1"/>
        <end position="432"/>
    </location>
</feature>
<feature type="domain" description="PPIase FKBP-type" evidence="1">
    <location>
        <begin position="161"/>
        <end position="246"/>
    </location>
</feature>
<evidence type="ECO:0000255" key="1">
    <source>
        <dbReference type="HAMAP-Rule" id="MF_00303"/>
    </source>
</evidence>
<proteinExistence type="inferred from homology"/>
<accession>Q0T7E7</accession>
<dbReference type="EC" id="5.2.1.8" evidence="1"/>
<dbReference type="EMBL" id="CP000266">
    <property type="protein sequence ID" value="ABF02679.1"/>
    <property type="molecule type" value="Genomic_DNA"/>
</dbReference>
<dbReference type="RefSeq" id="WP_001198386.1">
    <property type="nucleotide sequence ID" value="NC_008258.1"/>
</dbReference>
<dbReference type="SMR" id="Q0T7E7"/>
<dbReference type="GeneID" id="75202861"/>
<dbReference type="KEGG" id="sfv:SFV_0410"/>
<dbReference type="HOGENOM" id="CLU_033058_2_0_6"/>
<dbReference type="Proteomes" id="UP000000659">
    <property type="component" value="Chromosome"/>
</dbReference>
<dbReference type="GO" id="GO:0005737">
    <property type="term" value="C:cytoplasm"/>
    <property type="evidence" value="ECO:0007669"/>
    <property type="project" value="UniProtKB-SubCell"/>
</dbReference>
<dbReference type="GO" id="GO:0003755">
    <property type="term" value="F:peptidyl-prolyl cis-trans isomerase activity"/>
    <property type="evidence" value="ECO:0007669"/>
    <property type="project" value="UniProtKB-UniRule"/>
</dbReference>
<dbReference type="GO" id="GO:0044183">
    <property type="term" value="F:protein folding chaperone"/>
    <property type="evidence" value="ECO:0007669"/>
    <property type="project" value="TreeGrafter"/>
</dbReference>
<dbReference type="GO" id="GO:0043022">
    <property type="term" value="F:ribosome binding"/>
    <property type="evidence" value="ECO:0007669"/>
    <property type="project" value="TreeGrafter"/>
</dbReference>
<dbReference type="GO" id="GO:0051083">
    <property type="term" value="P:'de novo' cotranslational protein folding"/>
    <property type="evidence" value="ECO:0007669"/>
    <property type="project" value="TreeGrafter"/>
</dbReference>
<dbReference type="GO" id="GO:0051301">
    <property type="term" value="P:cell division"/>
    <property type="evidence" value="ECO:0007669"/>
    <property type="project" value="UniProtKB-KW"/>
</dbReference>
<dbReference type="GO" id="GO:0061077">
    <property type="term" value="P:chaperone-mediated protein folding"/>
    <property type="evidence" value="ECO:0007669"/>
    <property type="project" value="TreeGrafter"/>
</dbReference>
<dbReference type="GO" id="GO:0015031">
    <property type="term" value="P:protein transport"/>
    <property type="evidence" value="ECO:0007669"/>
    <property type="project" value="UniProtKB-UniRule"/>
</dbReference>
<dbReference type="GO" id="GO:0043335">
    <property type="term" value="P:protein unfolding"/>
    <property type="evidence" value="ECO:0007669"/>
    <property type="project" value="TreeGrafter"/>
</dbReference>
<dbReference type="FunFam" id="1.10.3120.10:FF:000001">
    <property type="entry name" value="Trigger factor"/>
    <property type="match status" value="1"/>
</dbReference>
<dbReference type="FunFam" id="3.10.50.40:FF:000001">
    <property type="entry name" value="Trigger factor"/>
    <property type="match status" value="1"/>
</dbReference>
<dbReference type="FunFam" id="3.30.70.1050:FF:000001">
    <property type="entry name" value="Trigger factor"/>
    <property type="match status" value="1"/>
</dbReference>
<dbReference type="Gene3D" id="3.10.50.40">
    <property type="match status" value="1"/>
</dbReference>
<dbReference type="Gene3D" id="3.30.70.1050">
    <property type="entry name" value="Trigger factor ribosome-binding domain"/>
    <property type="match status" value="1"/>
</dbReference>
<dbReference type="Gene3D" id="1.10.3120.10">
    <property type="entry name" value="Trigger factor, C-terminal domain"/>
    <property type="match status" value="1"/>
</dbReference>
<dbReference type="HAMAP" id="MF_00303">
    <property type="entry name" value="Trigger_factor_Tig"/>
    <property type="match status" value="1"/>
</dbReference>
<dbReference type="InterPro" id="IPR046357">
    <property type="entry name" value="PPIase_dom_sf"/>
</dbReference>
<dbReference type="InterPro" id="IPR001179">
    <property type="entry name" value="PPIase_FKBP_dom"/>
</dbReference>
<dbReference type="InterPro" id="IPR005215">
    <property type="entry name" value="Trig_fac"/>
</dbReference>
<dbReference type="InterPro" id="IPR008880">
    <property type="entry name" value="Trigger_fac_C"/>
</dbReference>
<dbReference type="InterPro" id="IPR037041">
    <property type="entry name" value="Trigger_fac_C_sf"/>
</dbReference>
<dbReference type="InterPro" id="IPR008881">
    <property type="entry name" value="Trigger_fac_ribosome-bd_bac"/>
</dbReference>
<dbReference type="InterPro" id="IPR036611">
    <property type="entry name" value="Trigger_fac_ribosome-bd_sf"/>
</dbReference>
<dbReference type="InterPro" id="IPR027304">
    <property type="entry name" value="Trigger_fact/SurA_dom_sf"/>
</dbReference>
<dbReference type="NCBIfam" id="TIGR00115">
    <property type="entry name" value="tig"/>
    <property type="match status" value="1"/>
</dbReference>
<dbReference type="PANTHER" id="PTHR30560">
    <property type="entry name" value="TRIGGER FACTOR CHAPERONE AND PEPTIDYL-PROLYL CIS/TRANS ISOMERASE"/>
    <property type="match status" value="1"/>
</dbReference>
<dbReference type="PANTHER" id="PTHR30560:SF3">
    <property type="entry name" value="TRIGGER FACTOR-LIKE PROTEIN TIG, CHLOROPLASTIC"/>
    <property type="match status" value="1"/>
</dbReference>
<dbReference type="Pfam" id="PF00254">
    <property type="entry name" value="FKBP_C"/>
    <property type="match status" value="1"/>
</dbReference>
<dbReference type="Pfam" id="PF05698">
    <property type="entry name" value="Trigger_C"/>
    <property type="match status" value="1"/>
</dbReference>
<dbReference type="Pfam" id="PF05697">
    <property type="entry name" value="Trigger_N"/>
    <property type="match status" value="1"/>
</dbReference>
<dbReference type="PIRSF" id="PIRSF003095">
    <property type="entry name" value="Trigger_factor"/>
    <property type="match status" value="1"/>
</dbReference>
<dbReference type="SUPFAM" id="SSF54534">
    <property type="entry name" value="FKBP-like"/>
    <property type="match status" value="1"/>
</dbReference>
<dbReference type="SUPFAM" id="SSF109998">
    <property type="entry name" value="Triger factor/SurA peptide-binding domain-like"/>
    <property type="match status" value="1"/>
</dbReference>
<dbReference type="SUPFAM" id="SSF102735">
    <property type="entry name" value="Trigger factor ribosome-binding domain"/>
    <property type="match status" value="1"/>
</dbReference>
<dbReference type="PROSITE" id="PS50059">
    <property type="entry name" value="FKBP_PPIASE"/>
    <property type="match status" value="1"/>
</dbReference>
<comment type="function">
    <text evidence="1">Involved in protein export. Acts as a chaperone by maintaining the newly synthesized protein in an open conformation. Functions as a peptidyl-prolyl cis-trans isomerase.</text>
</comment>
<comment type="catalytic activity">
    <reaction evidence="1">
        <text>[protein]-peptidylproline (omega=180) = [protein]-peptidylproline (omega=0)</text>
        <dbReference type="Rhea" id="RHEA:16237"/>
        <dbReference type="Rhea" id="RHEA-COMP:10747"/>
        <dbReference type="Rhea" id="RHEA-COMP:10748"/>
        <dbReference type="ChEBI" id="CHEBI:83833"/>
        <dbReference type="ChEBI" id="CHEBI:83834"/>
        <dbReference type="EC" id="5.2.1.8"/>
    </reaction>
</comment>
<comment type="subunit">
    <text evidence="1">Homodimer and monomer. In vivo most of the ribosomes are in complex with monomeric TF. Uncomplexed TF, however, is in a monomer-dimer equilibrium with approximately two thirds of TF existing in a dimeric state.</text>
</comment>
<comment type="subcellular location">
    <subcellularLocation>
        <location>Cytoplasm</location>
    </subcellularLocation>
    <text evidence="1">About half TF is bound to the ribosome near the polypeptide exit tunnel while the other half is free in the cytoplasm.</text>
</comment>
<comment type="domain">
    <text evidence="1">Consists of 3 domains; the N-terminus binds the ribosome, the middle domain has PPIase activity, while the C-terminus has intrinsic chaperone activity on its own.</text>
</comment>
<comment type="similarity">
    <text evidence="1">Belongs to the FKBP-type PPIase family. Tig subfamily.</text>
</comment>
<protein>
    <recommendedName>
        <fullName evidence="1">Trigger factor</fullName>
        <shortName evidence="1">TF</shortName>
        <ecNumber evidence="1">5.2.1.8</ecNumber>
    </recommendedName>
    <alternativeName>
        <fullName evidence="1">PPIase</fullName>
    </alternativeName>
</protein>